<name>LFTR_ALIFM</name>
<proteinExistence type="inferred from homology"/>
<keyword id="KW-0012">Acyltransferase</keyword>
<keyword id="KW-0963">Cytoplasm</keyword>
<keyword id="KW-0808">Transferase</keyword>
<accession>B5FG61</accession>
<evidence type="ECO:0000255" key="1">
    <source>
        <dbReference type="HAMAP-Rule" id="MF_00688"/>
    </source>
</evidence>
<feature type="chain" id="PRO_1000131956" description="Leucyl/phenylalanyl-tRNA--protein transferase">
    <location>
        <begin position="1"/>
        <end position="239"/>
    </location>
</feature>
<sequence>MTIYLPELIPSHSTVFPNIENALNNPDGLLIMGGDLSSAQLISAYQHGIFPWYSDGDPILWWSPSVRGVFFPEQFSPSKSLKKFFRKSNYNVTLNKATYQVIDLCASTRPKEETWIMPEMIKAYKTLVDLGYCHSVEVWNDNELIGGLYGLQIGQVFCGESMFSLQTNASKIALWKFCEHFVSSNGKLIDCQMMNPHLESLGAQEMKRSDFKTLLEELHVKPTSSDCYLAQTLGGSSFS</sequence>
<gene>
    <name evidence="1" type="primary">aat</name>
    <name type="ordered locus">VFMJ11_1889</name>
</gene>
<reference key="1">
    <citation type="submission" date="2008-08" db="EMBL/GenBank/DDBJ databases">
        <title>Complete sequence of Vibrio fischeri strain MJ11.</title>
        <authorList>
            <person name="Mandel M.J."/>
            <person name="Stabb E.V."/>
            <person name="Ruby E.G."/>
            <person name="Ferriera S."/>
            <person name="Johnson J."/>
            <person name="Kravitz S."/>
            <person name="Beeson K."/>
            <person name="Sutton G."/>
            <person name="Rogers Y.-H."/>
            <person name="Friedman R."/>
            <person name="Frazier M."/>
            <person name="Venter J.C."/>
        </authorList>
    </citation>
    <scope>NUCLEOTIDE SEQUENCE [LARGE SCALE GENOMIC DNA]</scope>
    <source>
        <strain>MJ11</strain>
    </source>
</reference>
<protein>
    <recommendedName>
        <fullName evidence="1">Leucyl/phenylalanyl-tRNA--protein transferase</fullName>
        <ecNumber evidence="1">2.3.2.6</ecNumber>
    </recommendedName>
    <alternativeName>
        <fullName evidence="1">L/F-transferase</fullName>
    </alternativeName>
    <alternativeName>
        <fullName evidence="1">Leucyltransferase</fullName>
    </alternativeName>
    <alternativeName>
        <fullName evidence="1">Phenyalanyltransferase</fullName>
    </alternativeName>
</protein>
<comment type="function">
    <text evidence="1">Functions in the N-end rule pathway of protein degradation where it conjugates Leu, Phe and, less efficiently, Met from aminoacyl-tRNAs to the N-termini of proteins containing an N-terminal arginine or lysine.</text>
</comment>
<comment type="catalytic activity">
    <reaction evidence="1">
        <text>N-terminal L-lysyl-[protein] + L-leucyl-tRNA(Leu) = N-terminal L-leucyl-L-lysyl-[protein] + tRNA(Leu) + H(+)</text>
        <dbReference type="Rhea" id="RHEA:12340"/>
        <dbReference type="Rhea" id="RHEA-COMP:9613"/>
        <dbReference type="Rhea" id="RHEA-COMP:9622"/>
        <dbReference type="Rhea" id="RHEA-COMP:12670"/>
        <dbReference type="Rhea" id="RHEA-COMP:12671"/>
        <dbReference type="ChEBI" id="CHEBI:15378"/>
        <dbReference type="ChEBI" id="CHEBI:65249"/>
        <dbReference type="ChEBI" id="CHEBI:78442"/>
        <dbReference type="ChEBI" id="CHEBI:78494"/>
        <dbReference type="ChEBI" id="CHEBI:133043"/>
        <dbReference type="EC" id="2.3.2.6"/>
    </reaction>
</comment>
<comment type="catalytic activity">
    <reaction evidence="1">
        <text>N-terminal L-arginyl-[protein] + L-leucyl-tRNA(Leu) = N-terminal L-leucyl-L-arginyl-[protein] + tRNA(Leu) + H(+)</text>
        <dbReference type="Rhea" id="RHEA:50416"/>
        <dbReference type="Rhea" id="RHEA-COMP:9613"/>
        <dbReference type="Rhea" id="RHEA-COMP:9622"/>
        <dbReference type="Rhea" id="RHEA-COMP:12672"/>
        <dbReference type="Rhea" id="RHEA-COMP:12673"/>
        <dbReference type="ChEBI" id="CHEBI:15378"/>
        <dbReference type="ChEBI" id="CHEBI:64719"/>
        <dbReference type="ChEBI" id="CHEBI:78442"/>
        <dbReference type="ChEBI" id="CHEBI:78494"/>
        <dbReference type="ChEBI" id="CHEBI:133044"/>
        <dbReference type="EC" id="2.3.2.6"/>
    </reaction>
</comment>
<comment type="catalytic activity">
    <reaction evidence="1">
        <text>L-phenylalanyl-tRNA(Phe) + an N-terminal L-alpha-aminoacyl-[protein] = an N-terminal L-phenylalanyl-L-alpha-aminoacyl-[protein] + tRNA(Phe)</text>
        <dbReference type="Rhea" id="RHEA:43632"/>
        <dbReference type="Rhea" id="RHEA-COMP:9668"/>
        <dbReference type="Rhea" id="RHEA-COMP:9699"/>
        <dbReference type="Rhea" id="RHEA-COMP:10636"/>
        <dbReference type="Rhea" id="RHEA-COMP:10637"/>
        <dbReference type="ChEBI" id="CHEBI:78442"/>
        <dbReference type="ChEBI" id="CHEBI:78531"/>
        <dbReference type="ChEBI" id="CHEBI:78597"/>
        <dbReference type="ChEBI" id="CHEBI:83561"/>
        <dbReference type="EC" id="2.3.2.6"/>
    </reaction>
</comment>
<comment type="subcellular location">
    <subcellularLocation>
        <location evidence="1">Cytoplasm</location>
    </subcellularLocation>
</comment>
<comment type="similarity">
    <text evidence="1">Belongs to the L/F-transferase family.</text>
</comment>
<dbReference type="EC" id="2.3.2.6" evidence="1"/>
<dbReference type="EMBL" id="CP001139">
    <property type="protein sequence ID" value="ACH65523.1"/>
    <property type="molecule type" value="Genomic_DNA"/>
</dbReference>
<dbReference type="RefSeq" id="WP_012533114.1">
    <property type="nucleotide sequence ID" value="NC_011184.1"/>
</dbReference>
<dbReference type="SMR" id="B5FG61"/>
<dbReference type="KEGG" id="vfm:VFMJ11_1889"/>
<dbReference type="HOGENOM" id="CLU_075045_0_0_6"/>
<dbReference type="Proteomes" id="UP000001857">
    <property type="component" value="Chromosome I"/>
</dbReference>
<dbReference type="GO" id="GO:0005737">
    <property type="term" value="C:cytoplasm"/>
    <property type="evidence" value="ECO:0007669"/>
    <property type="project" value="UniProtKB-SubCell"/>
</dbReference>
<dbReference type="GO" id="GO:0008914">
    <property type="term" value="F:leucyl-tRNA--protein transferase activity"/>
    <property type="evidence" value="ECO:0007669"/>
    <property type="project" value="UniProtKB-UniRule"/>
</dbReference>
<dbReference type="GO" id="GO:0030163">
    <property type="term" value="P:protein catabolic process"/>
    <property type="evidence" value="ECO:0007669"/>
    <property type="project" value="UniProtKB-UniRule"/>
</dbReference>
<dbReference type="FunFam" id="3.30.70.3550:FF:000001">
    <property type="entry name" value="Leucyl/phenylalanyl-tRNA--protein transferase"/>
    <property type="match status" value="1"/>
</dbReference>
<dbReference type="FunFam" id="3.40.630.70:FF:000001">
    <property type="entry name" value="Leucyl/phenylalanyl-tRNA--protein transferase"/>
    <property type="match status" value="1"/>
</dbReference>
<dbReference type="Gene3D" id="3.40.630.70">
    <property type="entry name" value="Leucyl/phenylalanyl-tRNA-protein transferase, C-terminal domain"/>
    <property type="match status" value="1"/>
</dbReference>
<dbReference type="Gene3D" id="3.30.70.3550">
    <property type="entry name" value="Leucyl/phenylalanyl-tRNA-protein transferase, N-terminal domain"/>
    <property type="match status" value="1"/>
</dbReference>
<dbReference type="HAMAP" id="MF_00688">
    <property type="entry name" value="Leu_Phe_trans"/>
    <property type="match status" value="1"/>
</dbReference>
<dbReference type="InterPro" id="IPR016181">
    <property type="entry name" value="Acyl_CoA_acyltransferase"/>
</dbReference>
<dbReference type="InterPro" id="IPR004616">
    <property type="entry name" value="Leu/Phe-tRNA_Trfase"/>
</dbReference>
<dbReference type="InterPro" id="IPR042203">
    <property type="entry name" value="Leu/Phe-tRNA_Trfase_C"/>
</dbReference>
<dbReference type="InterPro" id="IPR042221">
    <property type="entry name" value="Leu/Phe-tRNA_Trfase_N"/>
</dbReference>
<dbReference type="NCBIfam" id="TIGR00667">
    <property type="entry name" value="aat"/>
    <property type="match status" value="1"/>
</dbReference>
<dbReference type="PANTHER" id="PTHR30098">
    <property type="entry name" value="LEUCYL/PHENYLALANYL-TRNA--PROTEIN TRANSFERASE"/>
    <property type="match status" value="1"/>
</dbReference>
<dbReference type="PANTHER" id="PTHR30098:SF2">
    <property type="entry name" value="LEUCYL_PHENYLALANYL-TRNA--PROTEIN TRANSFERASE"/>
    <property type="match status" value="1"/>
</dbReference>
<dbReference type="Pfam" id="PF03588">
    <property type="entry name" value="Leu_Phe_trans"/>
    <property type="match status" value="1"/>
</dbReference>
<dbReference type="SUPFAM" id="SSF55729">
    <property type="entry name" value="Acyl-CoA N-acyltransferases (Nat)"/>
    <property type="match status" value="1"/>
</dbReference>
<organism>
    <name type="scientific">Aliivibrio fischeri (strain MJ11)</name>
    <name type="common">Vibrio fischeri</name>
    <dbReference type="NCBI Taxonomy" id="388396"/>
    <lineage>
        <taxon>Bacteria</taxon>
        <taxon>Pseudomonadati</taxon>
        <taxon>Pseudomonadota</taxon>
        <taxon>Gammaproteobacteria</taxon>
        <taxon>Vibrionales</taxon>
        <taxon>Vibrionaceae</taxon>
        <taxon>Aliivibrio</taxon>
    </lineage>
</organism>